<sequence>MKNSRFSGFQWAMMVFVFFVITMALSVILRDFQATIGVKRFVFSIKDLAPFIAAIVCILVFKHRKEQLAGLKFSISLKVIERLLLALILPLIILMIGLFSFNTYADSFILLQTSDLSVSLLTILIGHILMAFVVEFGFRSYLQNILETRMNTFFASIVVGLIYSVFTANTTYGVEYAGYHFLYTFMFSMIIGELIRATNGRTIYIATAFHASMTFALVFLFSEETGDLFSMKVIALSTTIVGVSFIIISLIIRAIVYKTTKQSLDEVDPNNYLSHIQDEEPSQEDASSTSNHDVSSKDETKQQDIDNDKHQSKKPNKSDDALTTSNYKEDASSVNKETDTTHNDNIKDHSTYTEDRHSSVVNDVKDEIHEVEDHKADTDKSH</sequence>
<protein>
    <recommendedName>
        <fullName>Lysostaphin resistance protein A</fullName>
    </recommendedName>
    <alternativeName>
        <fullName evidence="1">Surface protein display C</fullName>
    </alternativeName>
</protein>
<accession>Q8CRD1</accession>
<keyword id="KW-1003">Cell membrane</keyword>
<keyword id="KW-0134">Cell wall</keyword>
<keyword id="KW-0472">Membrane</keyword>
<keyword id="KW-0964">Secreted</keyword>
<keyword id="KW-0812">Transmembrane</keyword>
<keyword id="KW-1133">Transmembrane helix</keyword>
<evidence type="ECO:0000250" key="1">
    <source>
        <dbReference type="UniProtKB" id="A0A0H3KA40"/>
    </source>
</evidence>
<evidence type="ECO:0000250" key="2">
    <source>
        <dbReference type="UniProtKB" id="Q2FVT1"/>
    </source>
</evidence>
<evidence type="ECO:0000255" key="3"/>
<evidence type="ECO:0000256" key="4">
    <source>
        <dbReference type="SAM" id="MobiDB-lite"/>
    </source>
</evidence>
<evidence type="ECO:0000305" key="5"/>
<gene>
    <name type="primary">lyrA</name>
    <name evidence="1" type="synonym">spdC</name>
    <name type="ordered locus">SE_1908</name>
</gene>
<feature type="chain" id="PRO_0000274829" description="Lysostaphin resistance protein A">
    <location>
        <begin position="1"/>
        <end position="382"/>
    </location>
</feature>
<feature type="transmembrane region" description="Helical" evidence="3">
    <location>
        <begin position="9"/>
        <end position="29"/>
    </location>
</feature>
<feature type="transmembrane region" description="Helical" evidence="3">
    <location>
        <begin position="41"/>
        <end position="61"/>
    </location>
</feature>
<feature type="transmembrane region" description="Helical" evidence="3">
    <location>
        <begin position="83"/>
        <end position="103"/>
    </location>
</feature>
<feature type="transmembrane region" description="Helical" evidence="3">
    <location>
        <begin position="118"/>
        <end position="138"/>
    </location>
</feature>
<feature type="transmembrane region" description="Helical" evidence="3">
    <location>
        <begin position="153"/>
        <end position="173"/>
    </location>
</feature>
<feature type="transmembrane region" description="Helical" evidence="3">
    <location>
        <begin position="175"/>
        <end position="195"/>
    </location>
</feature>
<feature type="transmembrane region" description="Helical" evidence="3">
    <location>
        <begin position="202"/>
        <end position="222"/>
    </location>
</feature>
<feature type="transmembrane region" description="Helical" evidence="3">
    <location>
        <begin position="232"/>
        <end position="252"/>
    </location>
</feature>
<feature type="region of interest" description="Disordered" evidence="4">
    <location>
        <begin position="278"/>
        <end position="382"/>
    </location>
</feature>
<feature type="compositionally biased region" description="Polar residues" evidence="4">
    <location>
        <begin position="284"/>
        <end position="293"/>
    </location>
</feature>
<feature type="compositionally biased region" description="Basic and acidic residues" evidence="4">
    <location>
        <begin position="294"/>
        <end position="320"/>
    </location>
</feature>
<feature type="compositionally biased region" description="Basic and acidic residues" evidence="4">
    <location>
        <begin position="327"/>
        <end position="382"/>
    </location>
</feature>
<reference key="1">
    <citation type="journal article" date="2003" name="Mol. Microbiol.">
        <title>Genome-based analysis of virulence genes in a non-biofilm-forming Staphylococcus epidermidis strain (ATCC 12228).</title>
        <authorList>
            <person name="Zhang Y.-Q."/>
            <person name="Ren S.-X."/>
            <person name="Li H.-L."/>
            <person name="Wang Y.-X."/>
            <person name="Fu G."/>
            <person name="Yang J."/>
            <person name="Qin Z.-Q."/>
            <person name="Miao Y.-G."/>
            <person name="Wang W.-Y."/>
            <person name="Chen R.-S."/>
            <person name="Shen Y."/>
            <person name="Chen Z."/>
            <person name="Yuan Z.-H."/>
            <person name="Zhao G.-P."/>
            <person name="Qu D."/>
            <person name="Danchin A."/>
            <person name="Wen Y.-M."/>
        </authorList>
    </citation>
    <scope>NUCLEOTIDE SEQUENCE [LARGE SCALE GENOMIC DNA]</scope>
    <source>
        <strain>ATCC 12228 / FDA PCI 1200</strain>
    </source>
</reference>
<proteinExistence type="inferred from homology"/>
<dbReference type="EMBL" id="AE015929">
    <property type="protein sequence ID" value="AAO05549.1"/>
    <property type="molecule type" value="Genomic_DNA"/>
</dbReference>
<dbReference type="RefSeq" id="NP_765463.1">
    <property type="nucleotide sequence ID" value="NC_004461.1"/>
</dbReference>
<dbReference type="RefSeq" id="WP_001831571.1">
    <property type="nucleotide sequence ID" value="NZ_WBME01000027.1"/>
</dbReference>
<dbReference type="SMR" id="Q8CRD1"/>
<dbReference type="KEGG" id="sep:SE_1908"/>
<dbReference type="PATRIC" id="fig|176280.10.peg.1867"/>
<dbReference type="eggNOG" id="COG1266">
    <property type="taxonomic scope" value="Bacteria"/>
</dbReference>
<dbReference type="HOGENOM" id="CLU_046135_0_0_9"/>
<dbReference type="OrthoDB" id="2413325at2"/>
<dbReference type="Proteomes" id="UP000001411">
    <property type="component" value="Chromosome"/>
</dbReference>
<dbReference type="GO" id="GO:0005886">
    <property type="term" value="C:plasma membrane"/>
    <property type="evidence" value="ECO:0007669"/>
    <property type="project" value="UniProtKB-SubCell"/>
</dbReference>
<dbReference type="GO" id="GO:0004175">
    <property type="term" value="F:endopeptidase activity"/>
    <property type="evidence" value="ECO:0007669"/>
    <property type="project" value="UniProtKB-ARBA"/>
</dbReference>
<dbReference type="GO" id="GO:0080120">
    <property type="term" value="P:CAAX-box protein maturation"/>
    <property type="evidence" value="ECO:0007669"/>
    <property type="project" value="UniProtKB-ARBA"/>
</dbReference>
<dbReference type="InterPro" id="IPR036259">
    <property type="entry name" value="MFS_trans_sf"/>
</dbReference>
<dbReference type="InterPro" id="IPR003675">
    <property type="entry name" value="Rce1/LyrA-like_dom"/>
</dbReference>
<dbReference type="Pfam" id="PF02517">
    <property type="entry name" value="Rce1-like"/>
    <property type="match status" value="1"/>
</dbReference>
<dbReference type="SUPFAM" id="SSF103473">
    <property type="entry name" value="MFS general substrate transporter"/>
    <property type="match status" value="1"/>
</dbReference>
<name>LYRA_STAES</name>
<comment type="function">
    <text evidence="2">Involved in bacterial cell envelope homeostasis. Regulates peptidoglycan processing, perhaps acting as a scaffold protein.</text>
</comment>
<comment type="subcellular location">
    <subcellularLocation>
        <location evidence="2">Cell membrane</location>
        <topology evidence="2">Multi-pass membrane protein</topology>
    </subcellularLocation>
    <subcellularLocation>
        <location evidence="1">Secreted</location>
        <location evidence="1">Cell wall</location>
    </subcellularLocation>
    <subcellularLocation>
        <location evidence="2">Cell septum</location>
    </subcellularLocation>
    <text evidence="1">Localization to the cross-wall is enriched in dividing cells.</text>
</comment>
<comment type="similarity">
    <text evidence="5">Belongs to the LyrA family.</text>
</comment>
<organism>
    <name type="scientific">Staphylococcus epidermidis (strain ATCC 12228 / FDA PCI 1200)</name>
    <dbReference type="NCBI Taxonomy" id="176280"/>
    <lineage>
        <taxon>Bacteria</taxon>
        <taxon>Bacillati</taxon>
        <taxon>Bacillota</taxon>
        <taxon>Bacilli</taxon>
        <taxon>Bacillales</taxon>
        <taxon>Staphylococcaceae</taxon>
        <taxon>Staphylococcus</taxon>
    </lineage>
</organism>